<protein>
    <recommendedName>
        <fullName>Cysteine-rich venom protein DIS1</fullName>
        <shortName>CRVP</shortName>
    </recommendedName>
    <alternativeName>
        <fullName>Cysteine-rich secretory protein DIS1</fullName>
        <shortName>CRISP-DIS1</shortName>
    </alternativeName>
</protein>
<evidence type="ECO:0000250" key="1"/>
<evidence type="ECO:0000255" key="2">
    <source>
        <dbReference type="PROSITE-ProRule" id="PRU01005"/>
    </source>
</evidence>
<evidence type="ECO:0000305" key="3"/>
<reference key="1">
    <citation type="journal article" date="2006" name="Nature">
        <title>Early evolution of the venom system in lizards and snakes.</title>
        <authorList>
            <person name="Fry B.G."/>
            <person name="Vidal N."/>
            <person name="Norman J.A."/>
            <person name="Vonk F.J."/>
            <person name="Scheib H."/>
            <person name="Ramjan S.F.R."/>
            <person name="Kuruppu S."/>
            <person name="Fung K."/>
            <person name="Blair Hedges S."/>
            <person name="Richardson M.K."/>
            <person name="Hodgson W.C."/>
            <person name="Ignjatovic V."/>
            <person name="Summerhayes R."/>
            <person name="Kochva E."/>
        </authorList>
    </citation>
    <scope>NUCLEOTIDE SEQUENCE [LARGE SCALE MRNA]</scope>
    <source>
        <tissue>Venom gland</tissue>
    </source>
</reference>
<feature type="signal peptide" evidence="1">
    <location>
        <begin position="1"/>
        <end position="18"/>
    </location>
</feature>
<feature type="chain" id="PRO_0000380649" description="Cysteine-rich venom protein DIS1">
    <location>
        <begin position="19"/>
        <end position="237"/>
    </location>
</feature>
<feature type="domain" description="SCP">
    <location>
        <begin position="37"/>
        <end position="165"/>
    </location>
</feature>
<feature type="domain" description="ShKT" evidence="2">
    <location>
        <begin position="201"/>
        <end position="234"/>
    </location>
</feature>
<feature type="disulfide bond" evidence="2">
    <location>
        <begin position="74"/>
        <end position="152"/>
    </location>
</feature>
<feature type="disulfide bond" evidence="2">
    <location>
        <begin position="91"/>
        <end position="166"/>
    </location>
</feature>
<feature type="disulfide bond" evidence="2">
    <location>
        <begin position="147"/>
        <end position="163"/>
    </location>
</feature>
<feature type="disulfide bond" evidence="2">
    <location>
        <begin position="185"/>
        <end position="192"/>
    </location>
</feature>
<feature type="disulfide bond" evidence="2">
    <location>
        <begin position="188"/>
        <end position="197"/>
    </location>
</feature>
<feature type="disulfide bond" evidence="2">
    <location>
        <begin position="201"/>
        <end position="234"/>
    </location>
</feature>
<feature type="disulfide bond" evidence="2">
    <location>
        <begin position="219"/>
        <end position="232"/>
    </location>
</feature>
<organism>
    <name type="scientific">Dispholidus typus</name>
    <name type="common">Boomslang</name>
    <name type="synonym">Bucephalus typus</name>
    <dbReference type="NCBI Taxonomy" id="46295"/>
    <lineage>
        <taxon>Eukaryota</taxon>
        <taxon>Metazoa</taxon>
        <taxon>Chordata</taxon>
        <taxon>Craniata</taxon>
        <taxon>Vertebrata</taxon>
        <taxon>Euteleostomi</taxon>
        <taxon>Lepidosauria</taxon>
        <taxon>Squamata</taxon>
        <taxon>Bifurcata</taxon>
        <taxon>Unidentata</taxon>
        <taxon>Episquamata</taxon>
        <taxon>Toxicofera</taxon>
        <taxon>Serpentes</taxon>
        <taxon>Colubroidea</taxon>
        <taxon>Colubridae</taxon>
        <taxon>Colubrinae</taxon>
        <taxon>Dispholidus</taxon>
    </lineage>
</organism>
<proteinExistence type="evidence at transcript level"/>
<dbReference type="EMBL" id="DQ139889">
    <property type="protein sequence ID" value="AAZ75595.1"/>
    <property type="molecule type" value="mRNA"/>
</dbReference>
<dbReference type="SMR" id="Q2XXQ6"/>
<dbReference type="GO" id="GO:0005576">
    <property type="term" value="C:extracellular region"/>
    <property type="evidence" value="ECO:0007669"/>
    <property type="project" value="UniProtKB-SubCell"/>
</dbReference>
<dbReference type="GO" id="GO:0005246">
    <property type="term" value="F:calcium channel regulator activity"/>
    <property type="evidence" value="ECO:0007669"/>
    <property type="project" value="UniProtKB-KW"/>
</dbReference>
<dbReference type="GO" id="GO:0090729">
    <property type="term" value="F:toxin activity"/>
    <property type="evidence" value="ECO:0007669"/>
    <property type="project" value="UniProtKB-KW"/>
</dbReference>
<dbReference type="CDD" id="cd05383">
    <property type="entry name" value="CAP_CRISP"/>
    <property type="match status" value="1"/>
</dbReference>
<dbReference type="FunFam" id="1.10.10.740:FF:000001">
    <property type="entry name" value="Cysteine-rich secretory protein 2"/>
    <property type="match status" value="1"/>
</dbReference>
<dbReference type="FunFam" id="3.40.33.10:FF:000005">
    <property type="entry name" value="Cysteine-rich secretory protein 2"/>
    <property type="match status" value="1"/>
</dbReference>
<dbReference type="Gene3D" id="3.40.33.10">
    <property type="entry name" value="CAP"/>
    <property type="match status" value="1"/>
</dbReference>
<dbReference type="Gene3D" id="1.10.10.740">
    <property type="entry name" value="Crisp domain"/>
    <property type="match status" value="1"/>
</dbReference>
<dbReference type="InterPro" id="IPR018244">
    <property type="entry name" value="Allrgn_V5/Tpx1_CS"/>
</dbReference>
<dbReference type="InterPro" id="IPR014044">
    <property type="entry name" value="CAP_dom"/>
</dbReference>
<dbReference type="InterPro" id="IPR035940">
    <property type="entry name" value="CAP_sf"/>
</dbReference>
<dbReference type="InterPro" id="IPR042076">
    <property type="entry name" value="Crisp-like_dom"/>
</dbReference>
<dbReference type="InterPro" id="IPR001283">
    <property type="entry name" value="CRISP-related"/>
</dbReference>
<dbReference type="InterPro" id="IPR013871">
    <property type="entry name" value="Cysteine_rich_secretory"/>
</dbReference>
<dbReference type="InterPro" id="IPR034117">
    <property type="entry name" value="SCP_CRISP"/>
</dbReference>
<dbReference type="InterPro" id="IPR003582">
    <property type="entry name" value="ShKT_dom"/>
</dbReference>
<dbReference type="PANTHER" id="PTHR10334">
    <property type="entry name" value="CYSTEINE-RICH SECRETORY PROTEIN-RELATED"/>
    <property type="match status" value="1"/>
</dbReference>
<dbReference type="Pfam" id="PF00188">
    <property type="entry name" value="CAP"/>
    <property type="match status" value="1"/>
</dbReference>
<dbReference type="Pfam" id="PF08562">
    <property type="entry name" value="Crisp"/>
    <property type="match status" value="1"/>
</dbReference>
<dbReference type="PRINTS" id="PR00837">
    <property type="entry name" value="V5TPXLIKE"/>
</dbReference>
<dbReference type="SMART" id="SM00198">
    <property type="entry name" value="SCP"/>
    <property type="match status" value="1"/>
</dbReference>
<dbReference type="SUPFAM" id="SSF57546">
    <property type="entry name" value="Crisp domain-like"/>
    <property type="match status" value="1"/>
</dbReference>
<dbReference type="SUPFAM" id="SSF55797">
    <property type="entry name" value="PR-1-like"/>
    <property type="match status" value="1"/>
</dbReference>
<dbReference type="PROSITE" id="PS01009">
    <property type="entry name" value="CRISP_1"/>
    <property type="match status" value="1"/>
</dbReference>
<dbReference type="PROSITE" id="PS01010">
    <property type="entry name" value="CRISP_2"/>
    <property type="match status" value="1"/>
</dbReference>
<dbReference type="PROSITE" id="PS51670">
    <property type="entry name" value="SHKT"/>
    <property type="match status" value="1"/>
</dbReference>
<name>CRVP1_DISTY</name>
<accession>Q2XXQ6</accession>
<keyword id="KW-0108">Calcium channel impairing toxin</keyword>
<keyword id="KW-1015">Disulfide bond</keyword>
<keyword id="KW-0872">Ion channel impairing toxin</keyword>
<keyword id="KW-0528">Neurotoxin</keyword>
<keyword id="KW-0964">Secreted</keyword>
<keyword id="KW-0732">Signal</keyword>
<keyword id="KW-0800">Toxin</keyword>
<sequence>MFVFILLSLAAVLQQSFGNVDFNSESPRIKAKQREIVDKHNAFRRSVRPTASNMLRMEWYSEAASNAERWAYRCILDHSPKTSRILNGIKCGENIYMSSIPMTWIDIIKLWHDEYKNFIYGVGANPPGSVIGHYTQIVWYKSYRVGCAASYCPPSSYNYFYVCQYCPAGNFAGLTATPYKSGPTCGDCPSACDNGLCTNPCSREDVFMNCKSLVAQSNCQDDYIRKNCPATCFCPNK</sequence>
<comment type="function">
    <text evidence="1">Weakly blocks contraction of smooth muscle elicited by high potassium-induced depolarization, but does not block caffeine-stimulated contraction. May target voltage-gated calcium channels on smooth muscle (By similarity).</text>
</comment>
<comment type="subcellular location">
    <subcellularLocation>
        <location evidence="1">Secreted</location>
    </subcellularLocation>
</comment>
<comment type="tissue specificity">
    <text>Expressed by the venom gland.</text>
</comment>
<comment type="similarity">
    <text evidence="3">Belongs to the CRISP family.</text>
</comment>